<reference evidence="7" key="1">
    <citation type="submission" date="2003-01" db="EMBL/GenBank/DDBJ databases">
        <authorList>
            <consortium name="NIH - Xenopus Gene Collection (XGC) project"/>
        </authorList>
    </citation>
    <scope>NUCLEOTIDE SEQUENCE [LARGE SCALE MRNA]</scope>
    <source>
        <tissue evidence="7">Embryo</tissue>
    </source>
</reference>
<reference evidence="6" key="2">
    <citation type="journal article" date="1998" name="Curr. Biol.">
        <title>Developmental regulation of MCM replication factors in Xenopus laevis.</title>
        <authorList>
            <person name="Sible J.C."/>
            <person name="Erikson E."/>
            <person name="Hendrickson M."/>
            <person name="Maller J.L."/>
            <person name="Gautier J."/>
        </authorList>
    </citation>
    <scope>IDENTIFICATION IN A COMPLEX WITH ZMCM6</scope>
    <scope>DEVELOPMENTAL STAGE</scope>
</reference>
<sequence>MAAVTELDDQEMREAQREYLDFLDDEEDQGIYQSKVRDMISENQYRLIVNINDLRRKNEKRASLLMNNAFEGLIAFQRALKDFVASIDGTYAKQYEDFYIGLEGSFGSKHVTPRTLTSRFLSSVVCVEGIVTKCSLVRPKVVRSVHYCPATKKTIERKYTDLTSLEAFPSSAVYPTKDEENNPLETEYGLSIYKDHQTITIQEMPEKAPAGQLPRSVDIILDDDLVDKVKPGDRVQVIGTYRCLPSKQNGYTSASFRTILIACNVIQMSKEVTPVFSADDLAKIKKFSKSHSKDVFEQLSRSLAPSIHGHSYIKKAILCMLLGGVEKVLDNGTRIRGDINVLLIGDPSVAKSQLLRYVLFTAPRAIPTTGRGSSGVGLTAAVTTDQETGERRLEAGAMVLADRGVVCIDEFDKMSDMDRTAIHEVMEQGRVTIAKAGIHARLNARCSVLAAANPVYGRYDQYKTPMENIGLQDSLLSRFDLLFIMLDQMDPEHDREISDHVLRMHRYRSAGEQDGDALPLGSAVDILATEDPNVTSEEQQELQVYEKHDSLLHGVKKRREKVLSMEFMRKYIHVAKIFKPVLTQEAASFIAEEYTRLRNQDQMSTDVARTSPVTARSLETLIRLSTAHAKVRMSKTVQLQDAEAALELVQYAYFKKVLEKEKKRRRREGESDTEEEQTQPDGEGKKRRKKRRAQDGESHDPYEFSDTEDETPVVHTPKTPVNGQEEMETDSSAKPGLSGDRLKAFKSALLDAFKAAHAQSIAMAAMMEAINKNNDSPFSQAEVKAALELMEEANHIMVSDNIVFLI</sequence>
<proteinExistence type="evidence at protein level"/>
<comment type="function">
    <text evidence="1">Acts as a component of the mcm2-7 complex (mcm complex) which is the putative replicative helicase essential for 'once per cell cycle' DNA replication initiation and elongation in eukaryotic cells. The active ATPase sites in the mcm2-7 ring are formed through the interaction surfaces of two neighboring subunits such that a critical structure of a conserved arginine finger motif is provided in trans relative to the ATP-binding site of the Walker A box of the adjacent subunit. The six ATPase active sites, however, are likely to contribute differentially to the complex helicase activity. The existence of maternal and zygotic forms of mcm3 and mcm6 suggests that specific forms of mcm2-7 complexes may be used during different stages of development.</text>
</comment>
<comment type="catalytic activity">
    <reaction>
        <text>ATP + H2O = ADP + phosphate + H(+)</text>
        <dbReference type="Rhea" id="RHEA:13065"/>
        <dbReference type="ChEBI" id="CHEBI:15377"/>
        <dbReference type="ChEBI" id="CHEBI:15378"/>
        <dbReference type="ChEBI" id="CHEBI:30616"/>
        <dbReference type="ChEBI" id="CHEBI:43474"/>
        <dbReference type="ChEBI" id="CHEBI:456216"/>
        <dbReference type="EC" id="3.6.4.12"/>
    </reaction>
</comment>
<comment type="subunit">
    <text evidence="1 5">Component of the mcm2-7 complex (RLF-M) (By similarity). The complex forms a toroidal hexameric ring with the proposed subunit order mcm2-mcm6-mcm4-mcm7-mcm3-mcm5 (By similarity). Begins to associate with zmcm6 into mcm complexes at the neurula stage (PubMed:9512418). Component of the CMG helicase complex, composed of the mcm2-7 complex, the GINS complex and cdc45 (By similarity).</text>
</comment>
<comment type="subcellular location">
    <subcellularLocation>
        <location evidence="1">Nucleus</location>
    </subcellularLocation>
    <subcellularLocation>
        <location evidence="1">Chromosome</location>
    </subcellularLocation>
    <text evidence="1">Associated with chromatin before the formation of nuclei and detaches from it as DNA replication progresses.</text>
</comment>
<comment type="developmental stage">
    <text evidence="5">Expressed zygotically.</text>
</comment>
<comment type="similarity">
    <text evidence="3">Belongs to the MCM family.</text>
</comment>
<keyword id="KW-0067">ATP-binding</keyword>
<keyword id="KW-0131">Cell cycle</keyword>
<keyword id="KW-0158">Chromosome</keyword>
<keyword id="KW-0235">DNA replication</keyword>
<keyword id="KW-0238">DNA-binding</keyword>
<keyword id="KW-0347">Helicase</keyword>
<keyword id="KW-0378">Hydrolase</keyword>
<keyword id="KW-0547">Nucleotide-binding</keyword>
<keyword id="KW-0539">Nucleus</keyword>
<keyword id="KW-1185">Reference proteome</keyword>
<feature type="chain" id="PRO_0000240592" description="Zygotic DNA replication licensing factor mcm3">
    <location>
        <begin position="1"/>
        <end position="806"/>
    </location>
</feature>
<feature type="domain" description="MCM" evidence="3">
    <location>
        <begin position="295"/>
        <end position="502"/>
    </location>
</feature>
<feature type="region of interest" description="Disordered" evidence="4">
    <location>
        <begin position="662"/>
        <end position="738"/>
    </location>
</feature>
<feature type="short sequence motif" description="Arginine finger">
    <location>
        <begin position="477"/>
        <end position="480"/>
    </location>
</feature>
<feature type="compositionally biased region" description="Basic and acidic residues" evidence="4">
    <location>
        <begin position="693"/>
        <end position="702"/>
    </location>
</feature>
<feature type="binding site" evidence="3">
    <location>
        <begin position="345"/>
        <end position="352"/>
    </location>
    <ligand>
        <name>ATP</name>
        <dbReference type="ChEBI" id="CHEBI:30616"/>
    </ligand>
</feature>
<name>MCM3Z_XENLA</name>
<dbReference type="EC" id="3.6.4.12"/>
<dbReference type="EMBL" id="BC044051">
    <property type="protein sequence ID" value="AAH44051.1"/>
    <property type="molecule type" value="mRNA"/>
</dbReference>
<dbReference type="SMR" id="Q7ZXZ0"/>
<dbReference type="BioGRID" id="98092">
    <property type="interactions" value="1"/>
</dbReference>
<dbReference type="DNASU" id="379850"/>
<dbReference type="KEGG" id="xla:379850"/>
<dbReference type="AGR" id="Xenbase:XB-GENE-971651"/>
<dbReference type="CTD" id="379850"/>
<dbReference type="Xenbase" id="XB-GENE-971651">
    <property type="gene designation" value="zmcm3.L"/>
</dbReference>
<dbReference type="OMA" id="EANHIMV"/>
<dbReference type="OrthoDB" id="1882346at2759"/>
<dbReference type="Proteomes" id="UP000186698">
    <property type="component" value="Chromosome 5L"/>
</dbReference>
<dbReference type="Bgee" id="379850">
    <property type="expression patterns" value="Expressed in neurula embryo and 18 other cell types or tissues"/>
</dbReference>
<dbReference type="GO" id="GO:0071162">
    <property type="term" value="C:CMG complex"/>
    <property type="evidence" value="ECO:0000250"/>
    <property type="project" value="UniProtKB"/>
</dbReference>
<dbReference type="GO" id="GO:0042555">
    <property type="term" value="C:MCM complex"/>
    <property type="evidence" value="ECO:0000314"/>
    <property type="project" value="UniProtKB"/>
</dbReference>
<dbReference type="GO" id="GO:0005634">
    <property type="term" value="C:nucleus"/>
    <property type="evidence" value="ECO:0000318"/>
    <property type="project" value="GO_Central"/>
</dbReference>
<dbReference type="GO" id="GO:0005524">
    <property type="term" value="F:ATP binding"/>
    <property type="evidence" value="ECO:0007669"/>
    <property type="project" value="UniProtKB-KW"/>
</dbReference>
<dbReference type="GO" id="GO:0016887">
    <property type="term" value="F:ATP hydrolysis activity"/>
    <property type="evidence" value="ECO:0007669"/>
    <property type="project" value="InterPro"/>
</dbReference>
<dbReference type="GO" id="GO:0003697">
    <property type="term" value="F:single-stranded DNA binding"/>
    <property type="evidence" value="ECO:0000318"/>
    <property type="project" value="GO_Central"/>
</dbReference>
<dbReference type="GO" id="GO:0017116">
    <property type="term" value="F:single-stranded DNA helicase activity"/>
    <property type="evidence" value="ECO:0007669"/>
    <property type="project" value="TreeGrafter"/>
</dbReference>
<dbReference type="GO" id="GO:0006271">
    <property type="term" value="P:DNA strand elongation involved in DNA replication"/>
    <property type="evidence" value="ECO:0000318"/>
    <property type="project" value="GO_Central"/>
</dbReference>
<dbReference type="GO" id="GO:0000727">
    <property type="term" value="P:double-strand break repair via break-induced replication"/>
    <property type="evidence" value="ECO:0000318"/>
    <property type="project" value="GO_Central"/>
</dbReference>
<dbReference type="GO" id="GO:1902975">
    <property type="term" value="P:mitotic DNA replication initiation"/>
    <property type="evidence" value="ECO:0000318"/>
    <property type="project" value="GO_Central"/>
</dbReference>
<dbReference type="GO" id="GO:0030174">
    <property type="term" value="P:regulation of DNA-templated DNA replication initiation"/>
    <property type="evidence" value="ECO:0000305"/>
    <property type="project" value="UniProtKB"/>
</dbReference>
<dbReference type="CDD" id="cd17754">
    <property type="entry name" value="MCM3"/>
    <property type="match status" value="1"/>
</dbReference>
<dbReference type="FunFam" id="2.20.28.10:FF:000006">
    <property type="entry name" value="DNA helicase"/>
    <property type="match status" value="1"/>
</dbReference>
<dbReference type="FunFam" id="3.30.1640.10:FF:000002">
    <property type="entry name" value="DNA helicase"/>
    <property type="match status" value="1"/>
</dbReference>
<dbReference type="Gene3D" id="2.20.28.10">
    <property type="match status" value="1"/>
</dbReference>
<dbReference type="Gene3D" id="3.30.1640.10">
    <property type="entry name" value="mini-chromosome maintenance (MCM) complex, chain A, domain 1"/>
    <property type="match status" value="1"/>
</dbReference>
<dbReference type="Gene3D" id="2.40.50.140">
    <property type="entry name" value="Nucleic acid-binding proteins"/>
    <property type="match status" value="1"/>
</dbReference>
<dbReference type="Gene3D" id="3.40.50.300">
    <property type="entry name" value="P-loop containing nucleotide triphosphate hydrolases"/>
    <property type="match status" value="1"/>
</dbReference>
<dbReference type="InterPro" id="IPR003593">
    <property type="entry name" value="AAA+_ATPase"/>
</dbReference>
<dbReference type="InterPro" id="IPR031327">
    <property type="entry name" value="MCM"/>
</dbReference>
<dbReference type="InterPro" id="IPR008046">
    <property type="entry name" value="Mcm3"/>
</dbReference>
<dbReference type="InterPro" id="IPR018525">
    <property type="entry name" value="MCM_CS"/>
</dbReference>
<dbReference type="InterPro" id="IPR001208">
    <property type="entry name" value="MCM_dom"/>
</dbReference>
<dbReference type="InterPro" id="IPR041562">
    <property type="entry name" value="MCM_lid"/>
</dbReference>
<dbReference type="InterPro" id="IPR027925">
    <property type="entry name" value="MCM_N"/>
</dbReference>
<dbReference type="InterPro" id="IPR033762">
    <property type="entry name" value="MCM_OB"/>
</dbReference>
<dbReference type="InterPro" id="IPR012340">
    <property type="entry name" value="NA-bd_OB-fold"/>
</dbReference>
<dbReference type="InterPro" id="IPR027417">
    <property type="entry name" value="P-loop_NTPase"/>
</dbReference>
<dbReference type="InterPro" id="IPR056575">
    <property type="entry name" value="WH_MCM3_C"/>
</dbReference>
<dbReference type="PANTHER" id="PTHR11630">
    <property type="entry name" value="DNA REPLICATION LICENSING FACTOR MCM FAMILY MEMBER"/>
    <property type="match status" value="1"/>
</dbReference>
<dbReference type="PANTHER" id="PTHR11630:SF106">
    <property type="entry name" value="DNA REPLICATION LICENSING FACTOR MCM3"/>
    <property type="match status" value="1"/>
</dbReference>
<dbReference type="Pfam" id="PF00493">
    <property type="entry name" value="MCM"/>
    <property type="match status" value="1"/>
</dbReference>
<dbReference type="Pfam" id="PF17855">
    <property type="entry name" value="MCM_lid"/>
    <property type="match status" value="1"/>
</dbReference>
<dbReference type="Pfam" id="PF14551">
    <property type="entry name" value="MCM_N"/>
    <property type="match status" value="1"/>
</dbReference>
<dbReference type="Pfam" id="PF17207">
    <property type="entry name" value="MCM_OB"/>
    <property type="match status" value="1"/>
</dbReference>
<dbReference type="Pfam" id="PF23191">
    <property type="entry name" value="WH_MCM3_C"/>
    <property type="match status" value="1"/>
</dbReference>
<dbReference type="PRINTS" id="PR01657">
    <property type="entry name" value="MCMFAMILY"/>
</dbReference>
<dbReference type="PRINTS" id="PR01659">
    <property type="entry name" value="MCMPROTEIN3"/>
</dbReference>
<dbReference type="SMART" id="SM00382">
    <property type="entry name" value="AAA"/>
    <property type="match status" value="1"/>
</dbReference>
<dbReference type="SMART" id="SM00350">
    <property type="entry name" value="MCM"/>
    <property type="match status" value="1"/>
</dbReference>
<dbReference type="SUPFAM" id="SSF50249">
    <property type="entry name" value="Nucleic acid-binding proteins"/>
    <property type="match status" value="1"/>
</dbReference>
<dbReference type="SUPFAM" id="SSF52540">
    <property type="entry name" value="P-loop containing nucleoside triphosphate hydrolases"/>
    <property type="match status" value="1"/>
</dbReference>
<dbReference type="PROSITE" id="PS00847">
    <property type="entry name" value="MCM_1"/>
    <property type="match status" value="1"/>
</dbReference>
<dbReference type="PROSITE" id="PS50051">
    <property type="entry name" value="MCM_2"/>
    <property type="match status" value="1"/>
</dbReference>
<evidence type="ECO:0000250" key="1">
    <source>
        <dbReference type="UniProtKB" id="P49739"/>
    </source>
</evidence>
<evidence type="ECO:0000250" key="2">
    <source>
        <dbReference type="UniProtKB" id="Q498J7"/>
    </source>
</evidence>
<evidence type="ECO:0000255" key="3"/>
<evidence type="ECO:0000256" key="4">
    <source>
        <dbReference type="SAM" id="MobiDB-lite"/>
    </source>
</evidence>
<evidence type="ECO:0000269" key="5">
    <source>
    </source>
</evidence>
<evidence type="ECO:0000305" key="6"/>
<evidence type="ECO:0000312" key="7">
    <source>
        <dbReference type="EMBL" id="AAH44051.1"/>
    </source>
</evidence>
<accession>Q7ZXZ0</accession>
<organism>
    <name type="scientific">Xenopus laevis</name>
    <name type="common">African clawed frog</name>
    <dbReference type="NCBI Taxonomy" id="8355"/>
    <lineage>
        <taxon>Eukaryota</taxon>
        <taxon>Metazoa</taxon>
        <taxon>Chordata</taxon>
        <taxon>Craniata</taxon>
        <taxon>Vertebrata</taxon>
        <taxon>Euteleostomi</taxon>
        <taxon>Amphibia</taxon>
        <taxon>Batrachia</taxon>
        <taxon>Anura</taxon>
        <taxon>Pipoidea</taxon>
        <taxon>Pipidae</taxon>
        <taxon>Xenopodinae</taxon>
        <taxon>Xenopus</taxon>
        <taxon>Xenopus</taxon>
    </lineage>
</organism>
<protein>
    <recommendedName>
        <fullName>Zygotic DNA replication licensing factor mcm3</fullName>
        <ecNumber>3.6.4.12</ecNumber>
    </recommendedName>
    <alternativeName>
        <fullName>Zygotic minichromosome maintenance protein 3</fullName>
        <shortName>zMCM3</shortName>
    </alternativeName>
</protein>
<gene>
    <name evidence="1 2" type="primary">zmcm3</name>
</gene>